<organism>
    <name type="scientific">Conus geographus</name>
    <name type="common">Geography cone</name>
    <name type="synonym">Nubecula geographus</name>
    <dbReference type="NCBI Taxonomy" id="6491"/>
    <lineage>
        <taxon>Eukaryota</taxon>
        <taxon>Metazoa</taxon>
        <taxon>Spiralia</taxon>
        <taxon>Lophotrochozoa</taxon>
        <taxon>Mollusca</taxon>
        <taxon>Gastropoda</taxon>
        <taxon>Caenogastropoda</taxon>
        <taxon>Neogastropoda</taxon>
        <taxon>Conoidea</taxon>
        <taxon>Conidae</taxon>
        <taxon>Conus</taxon>
        <taxon>Gastridium</taxon>
    </lineage>
</organism>
<reference key="1">
    <citation type="journal article" date="1985" name="Science">
        <title>Peptide neurotoxins from fish-hunting cone snails.</title>
        <authorList>
            <person name="Olivera B.M."/>
            <person name="Gray W.R."/>
            <person name="Zeikus R.D."/>
            <person name="McIntosh J.M."/>
            <person name="Varga J."/>
            <person name="Rivier J.E."/>
            <person name="de Santos V."/>
            <person name="Cruz L.J."/>
        </authorList>
    </citation>
    <scope>PROTEIN SEQUENCE</scope>
    <scope>HYDROXYLATION AT PRO-4 AND PRO-7</scope>
    <scope>SUBCELLULAR LOCATION</scope>
</reference>
<evidence type="ECO:0000269" key="1">
    <source>
    </source>
</evidence>
<evidence type="ECO:0000305" key="2"/>
<evidence type="ECO:0000305" key="3">
    <source>
    </source>
</evidence>
<feature type="peptide" id="PRO_0000044475" description="Omega-conotoxins GVIIA/GVIIB">
    <location>
        <begin position="1"/>
        <end position="29"/>
    </location>
</feature>
<feature type="modified residue" description="4-hydroxyproline" evidence="1">
    <location>
        <position position="4"/>
    </location>
</feature>
<feature type="modified residue" description="4-hydroxyproline" evidence="1">
    <location>
        <position position="7"/>
    </location>
</feature>
<feature type="disulfide bond">
    <location>
        <begin position="1"/>
        <end position="16"/>
    </location>
</feature>
<feature type="disulfide bond">
    <location>
        <begin position="8"/>
        <end position="19"/>
    </location>
</feature>
<feature type="disulfide bond">
    <location>
        <begin position="15"/>
        <end position="26"/>
    </location>
</feature>
<feature type="sequence variant" description="In GVIIB.">
    <original>L</original>
    <variation>S</variation>
    <location>
        <position position="21"/>
    </location>
</feature>
<name>U7AB_CONGE</name>
<dbReference type="PIR" id="A43620">
    <property type="entry name" value="A43620"/>
</dbReference>
<dbReference type="PIR" id="B43620">
    <property type="entry name" value="B43620"/>
</dbReference>
<dbReference type="SMR" id="P05483"/>
<dbReference type="ConoServer" id="1743">
    <property type="toxin name" value="GVIIA"/>
</dbReference>
<dbReference type="ConoServer" id="2581">
    <property type="toxin name" value="GVIIB"/>
</dbReference>
<dbReference type="GO" id="GO:0005576">
    <property type="term" value="C:extracellular region"/>
    <property type="evidence" value="ECO:0007669"/>
    <property type="project" value="UniProtKB-SubCell"/>
</dbReference>
<dbReference type="GO" id="GO:0044231">
    <property type="term" value="C:host cell presynaptic membrane"/>
    <property type="evidence" value="ECO:0007669"/>
    <property type="project" value="UniProtKB-KW"/>
</dbReference>
<dbReference type="GO" id="GO:0005246">
    <property type="term" value="F:calcium channel regulator activity"/>
    <property type="evidence" value="ECO:0007669"/>
    <property type="project" value="UniProtKB-KW"/>
</dbReference>
<dbReference type="GO" id="GO:0008200">
    <property type="term" value="F:ion channel inhibitor activity"/>
    <property type="evidence" value="ECO:0007669"/>
    <property type="project" value="InterPro"/>
</dbReference>
<dbReference type="GO" id="GO:0090729">
    <property type="term" value="F:toxin activity"/>
    <property type="evidence" value="ECO:0007669"/>
    <property type="project" value="UniProtKB-KW"/>
</dbReference>
<dbReference type="InterPro" id="IPR012321">
    <property type="entry name" value="Conotoxin_omega-typ_CS"/>
</dbReference>
<dbReference type="PROSITE" id="PS60004">
    <property type="entry name" value="OMEGA_CONOTOXIN"/>
    <property type="match status" value="1"/>
</dbReference>
<comment type="function">
    <text>Omega-conotoxins act at presynaptic membranes, they bind and block voltage-gated calcium channels (Cav).</text>
</comment>
<comment type="subcellular location">
    <subcellularLocation>
        <location evidence="1">Secreted</location>
    </subcellularLocation>
</comment>
<comment type="tissue specificity">
    <text evidence="3">Expressed by the venom duct.</text>
</comment>
<comment type="domain">
    <text>The presence of a 'disulfide through disulfide knot' structurally defines this protein as a knottin.</text>
</comment>
<comment type="domain">
    <text evidence="2">The cysteine framework is VI/VII (C-C-CC-C-C).</text>
</comment>
<comment type="miscellaneous">
    <text>The sequence shown is that of conotoxin GVIIA.</text>
</comment>
<accession>P05483</accession>
<proteinExistence type="evidence at protein level"/>
<sequence>CKSPGTPCSRGMRDCCTSCLLYSNKCRRY</sequence>
<protein>
    <recommendedName>
        <fullName>Omega-conotoxins GVIIA/GVIIB</fullName>
    </recommendedName>
    <alternativeName>
        <fullName>SNX-178</fullName>
    </alternativeName>
    <alternativeName>
        <fullName>Shaker peptides GVIIA/GVIIB</fullName>
    </alternativeName>
</protein>
<keyword id="KW-0108">Calcium channel impairing toxin</keyword>
<keyword id="KW-0903">Direct protein sequencing</keyword>
<keyword id="KW-1015">Disulfide bond</keyword>
<keyword id="KW-0379">Hydroxylation</keyword>
<keyword id="KW-0872">Ion channel impairing toxin</keyword>
<keyword id="KW-0960">Knottin</keyword>
<keyword id="KW-0528">Neurotoxin</keyword>
<keyword id="KW-0638">Presynaptic neurotoxin</keyword>
<keyword id="KW-0964">Secreted</keyword>
<keyword id="KW-0800">Toxin</keyword>
<keyword id="KW-1218">Voltage-gated calcium channel impairing toxin</keyword>